<comment type="function">
    <text evidence="1">Component of the FERRY complex (Five-subunit Endosomal Rab5 and RNA/ribosome intermediary). The FERRY complex directly interacts with mRNAs and RAB5A, and functions as a RAB5A effector involved in the localization and the distribution of specific mRNAs most likely by mediating their endosomal transport. The complex recruits mRNAs and ribosomes to early endosomes through direct mRNA-interaction.</text>
</comment>
<comment type="subunit">
    <text evidence="1">Homotetramer. Component of the FERRY complex.</text>
</comment>
<comment type="subcellular location">
    <subcellularLocation>
        <location evidence="1">Secreted</location>
    </subcellularLocation>
    <subcellularLocation>
        <location evidence="1">Early endosome</location>
    </subcellularLocation>
</comment>
<comment type="similarity">
    <text evidence="3">Belongs to the peptidase C56 family.</text>
</comment>
<evidence type="ECO:0000250" key="1">
    <source>
        <dbReference type="UniProtKB" id="Q8NB37"/>
    </source>
</evidence>
<evidence type="ECO:0000255" key="2"/>
<evidence type="ECO:0000305" key="3"/>
<sequence length="229" mass="24657">MKKQGAPVSGGGTERLTKPSCLMVGSAVAEGVSAQSFLHSFTLASSAFNLQVATPGGKALDFVGISETDSRWFQDFQLKPYSNPARLESIDGSRYHALLIPHCPGALTDLANSGYLARILQHFTAEKKPICAIGHGVTALCCATNQDKSWVFQNYSLTGPSVYELVRRPEYASLPLILEDYAKDSGATFSASEPDAIHVVLDRHLITGQNDNSTMPAVQNLILLCNGRK</sequence>
<name>GALD1_XENLA</name>
<accession>Q32NG4</accession>
<proteinExistence type="evidence at transcript level"/>
<keyword id="KW-0967">Endosome</keyword>
<keyword id="KW-0325">Glycoprotein</keyword>
<keyword id="KW-1185">Reference proteome</keyword>
<keyword id="KW-0964">Secreted</keyword>
<keyword id="KW-0732">Signal</keyword>
<organism>
    <name type="scientific">Xenopus laevis</name>
    <name type="common">African clawed frog</name>
    <dbReference type="NCBI Taxonomy" id="8355"/>
    <lineage>
        <taxon>Eukaryota</taxon>
        <taxon>Metazoa</taxon>
        <taxon>Chordata</taxon>
        <taxon>Craniata</taxon>
        <taxon>Vertebrata</taxon>
        <taxon>Euteleostomi</taxon>
        <taxon>Amphibia</taxon>
        <taxon>Batrachia</taxon>
        <taxon>Anura</taxon>
        <taxon>Pipoidea</taxon>
        <taxon>Pipidae</taxon>
        <taxon>Xenopodinae</taxon>
        <taxon>Xenopus</taxon>
        <taxon>Xenopus</taxon>
    </lineage>
</organism>
<gene>
    <name evidence="1" type="primary">gatd1</name>
    <name evidence="3" type="synonym">pddc1</name>
</gene>
<reference key="1">
    <citation type="submission" date="2005-11" db="EMBL/GenBank/DDBJ databases">
        <authorList>
            <consortium name="NIH - Xenopus Gene Collection (XGC) project"/>
        </authorList>
    </citation>
    <scope>NUCLEOTIDE SEQUENCE [LARGE SCALE MRNA]</scope>
    <source>
        <tissue>Testis</tissue>
    </source>
</reference>
<protein>
    <recommendedName>
        <fullName evidence="1">Glutamine amidotransferase-like class 1 domain-containing protein 1</fullName>
    </recommendedName>
    <alternativeName>
        <fullName>Ferry endosomal RAB5 effector complex subunit 5</fullName>
        <shortName evidence="1">Fy-5</shortName>
    </alternativeName>
    <alternativeName>
        <fullName evidence="3">Parkinson disease 7 domain-containing protein 1</fullName>
    </alternativeName>
</protein>
<dbReference type="EMBL" id="BC108639">
    <property type="protein sequence ID" value="AAI08640.1"/>
    <property type="molecule type" value="mRNA"/>
</dbReference>
<dbReference type="RefSeq" id="NP_001089896.1">
    <property type="nucleotide sequence ID" value="NM_001096427.1"/>
</dbReference>
<dbReference type="SMR" id="Q32NG4"/>
<dbReference type="GlyCosmos" id="Q32NG4">
    <property type="glycosylation" value="2 sites, No reported glycans"/>
</dbReference>
<dbReference type="DNASU" id="734963"/>
<dbReference type="GeneID" id="734963"/>
<dbReference type="KEGG" id="xla:734963"/>
<dbReference type="AGR" id="Xenbase:XB-GENE-1005355"/>
<dbReference type="CTD" id="734963"/>
<dbReference type="Xenbase" id="XB-GENE-1005355">
    <property type="gene designation" value="gatd1.L"/>
</dbReference>
<dbReference type="OrthoDB" id="543156at2759"/>
<dbReference type="Proteomes" id="UP000186698">
    <property type="component" value="Chromosome 4L"/>
</dbReference>
<dbReference type="Bgee" id="734963">
    <property type="expression patterns" value="Expressed in kidney and 19 other cell types or tissues"/>
</dbReference>
<dbReference type="GO" id="GO:0005737">
    <property type="term" value="C:cytoplasm"/>
    <property type="evidence" value="ECO:0000318"/>
    <property type="project" value="GO_Central"/>
</dbReference>
<dbReference type="GO" id="GO:0005769">
    <property type="term" value="C:early endosome"/>
    <property type="evidence" value="ECO:0007669"/>
    <property type="project" value="UniProtKB-SubCell"/>
</dbReference>
<dbReference type="GO" id="GO:0005576">
    <property type="term" value="C:extracellular region"/>
    <property type="evidence" value="ECO:0007669"/>
    <property type="project" value="UniProtKB-SubCell"/>
</dbReference>
<dbReference type="GO" id="GO:0019172">
    <property type="term" value="F:glyoxalase III activity"/>
    <property type="evidence" value="ECO:0000318"/>
    <property type="project" value="GO_Central"/>
</dbReference>
<dbReference type="GO" id="GO:0019243">
    <property type="term" value="P:methylglyoxal catabolic process to D-lactate via S-lactoyl-glutathione"/>
    <property type="evidence" value="ECO:0000318"/>
    <property type="project" value="GO_Central"/>
</dbReference>
<dbReference type="CDD" id="cd03141">
    <property type="entry name" value="GATase1_Hsp31_like"/>
    <property type="match status" value="1"/>
</dbReference>
<dbReference type="Gene3D" id="3.40.50.880">
    <property type="match status" value="1"/>
</dbReference>
<dbReference type="InterPro" id="IPR029062">
    <property type="entry name" value="Class_I_gatase-like"/>
</dbReference>
<dbReference type="InterPro" id="IPR050325">
    <property type="entry name" value="Prot/Nucl_acid_deglycase"/>
</dbReference>
<dbReference type="PANTHER" id="PTHR48094:SF18">
    <property type="entry name" value="GLUTAMINE AMIDOTRANSFERASE-LIKE CLASS 1 DOMAIN-CONTAINING PROTEIN 1"/>
    <property type="match status" value="1"/>
</dbReference>
<dbReference type="PANTHER" id="PTHR48094">
    <property type="entry name" value="PROTEIN/NUCLEIC ACID DEGLYCASE DJ-1-RELATED"/>
    <property type="match status" value="1"/>
</dbReference>
<dbReference type="SUPFAM" id="SSF52317">
    <property type="entry name" value="Class I glutamine amidotransferase-like"/>
    <property type="match status" value="1"/>
</dbReference>
<feature type="signal peptide" evidence="2">
    <location>
        <begin position="1"/>
        <end position="34"/>
    </location>
</feature>
<feature type="chain" id="PRO_0000305097" description="Glutamine amidotransferase-like class 1 domain-containing protein 1">
    <location>
        <begin position="35"/>
        <end position="229"/>
    </location>
</feature>
<feature type="glycosylation site" description="N-linked (GlcNAc...) asparagine" evidence="2">
    <location>
        <position position="154"/>
    </location>
</feature>
<feature type="glycosylation site" description="N-linked (GlcNAc...) asparagine" evidence="2">
    <location>
        <position position="212"/>
    </location>
</feature>